<evidence type="ECO:0000250" key="1"/>
<evidence type="ECO:0000255" key="2"/>
<evidence type="ECO:0000269" key="3">
    <source>
    </source>
</evidence>
<evidence type="ECO:0000269" key="4">
    <source>
    </source>
</evidence>
<evidence type="ECO:0000305" key="5"/>
<comment type="function">
    <text evidence="3 4">Involved in lipopolysaccharide (LPS) biosynthesis. Catalyzes the transfer of three 3-deoxy-D-manno-octulosonate (Kdo) residues from CMP-Kdo to lipid IV(A), the tetraacyldisaccharide-1,4'-bisphosphate precursor of lipid A. Thus generates the genus-specific LPS epitope of Chlamydia, composed of the trisaccharide alpha-Kdo-(2-&gt;8)-alpha-Kdo-(2-&gt;4)-alpha-Kdo.</text>
</comment>
<comment type="catalytic activity">
    <reaction evidence="3 4">
        <text>lipid IVA (E. coli) + CMP-3-deoxy-beta-D-manno-octulosonate = alpha-Kdo-(2-&gt;6)-lipid IVA (E. coli) + CMP + H(+)</text>
        <dbReference type="Rhea" id="RHEA:28066"/>
        <dbReference type="ChEBI" id="CHEBI:15378"/>
        <dbReference type="ChEBI" id="CHEBI:58603"/>
        <dbReference type="ChEBI" id="CHEBI:60364"/>
        <dbReference type="ChEBI" id="CHEBI:60377"/>
        <dbReference type="ChEBI" id="CHEBI:85987"/>
        <dbReference type="EC" id="2.4.99.12"/>
    </reaction>
</comment>
<comment type="catalytic activity">
    <reaction evidence="3 4">
        <text>alpha-Kdo-(2-&gt;6)-lipid IVA (E. coli) + CMP-3-deoxy-beta-D-manno-octulosonate = alpha-Kdo-(2-&gt;4)-alpha-Kdo-(2-&gt;6)-lipid IVA (E. coli) + CMP + H(+)</text>
        <dbReference type="Rhea" id="RHEA:28062"/>
        <dbReference type="ChEBI" id="CHEBI:15378"/>
        <dbReference type="ChEBI" id="CHEBI:60364"/>
        <dbReference type="ChEBI" id="CHEBI:60365"/>
        <dbReference type="ChEBI" id="CHEBI:60377"/>
        <dbReference type="ChEBI" id="CHEBI:85987"/>
        <dbReference type="EC" id="2.4.99.13"/>
    </reaction>
</comment>
<comment type="catalytic activity">
    <reaction evidence="3 4">
        <text>alpha-Kdo-(2-&gt;4)-alpha-Kdo-(2-&gt;6)-lipid IVA (E. coli) + CMP-3-deoxy-beta-D-manno-octulosonate = alpha-Kdo-(2-&gt;8)-alpha-Kdo-(2-&gt;4)-alpha-Kdo-(2-&gt;6)-lipid IVA (E. coli) + CMP + H(+)</text>
        <dbReference type="Rhea" id="RHEA:28154"/>
        <dbReference type="ChEBI" id="CHEBI:15378"/>
        <dbReference type="ChEBI" id="CHEBI:60365"/>
        <dbReference type="ChEBI" id="CHEBI:60377"/>
        <dbReference type="ChEBI" id="CHEBI:85987"/>
        <dbReference type="ChEBI" id="CHEBI:86234"/>
        <dbReference type="EC" id="2.4.99.14"/>
    </reaction>
</comment>
<comment type="pathway">
    <text>Bacterial outer membrane biogenesis; LPS core biosynthesis.</text>
</comment>
<comment type="subcellular location">
    <subcellularLocation>
        <location evidence="1">Cell inner membrane</location>
        <topology evidence="1">Single-pass membrane protein</topology>
        <orientation evidence="1">Cytoplasmic side</orientation>
    </subcellularLocation>
</comment>
<comment type="similarity">
    <text evidence="5">Belongs to the glycosyltransferase group 1 family. Glycosyltransferase 30 subfamily.</text>
</comment>
<organism>
    <name type="scientific">Chlamydia pneumoniae</name>
    <name type="common">Chlamydophila pneumoniae</name>
    <dbReference type="NCBI Taxonomy" id="83558"/>
    <lineage>
        <taxon>Bacteria</taxon>
        <taxon>Pseudomonadati</taxon>
        <taxon>Chlamydiota</taxon>
        <taxon>Chlamydiia</taxon>
        <taxon>Chlamydiales</taxon>
        <taxon>Chlamydiaceae</taxon>
        <taxon>Chlamydia/Chlamydophila group</taxon>
        <taxon>Chlamydia</taxon>
    </lineage>
</organism>
<dbReference type="EC" id="2.4.99.12" evidence="3 4"/>
<dbReference type="EC" id="2.4.99.13" evidence="3 4"/>
<dbReference type="EC" id="2.4.99.14" evidence="3 4"/>
<dbReference type="EMBL" id="Z31593">
    <property type="protein sequence ID" value="CAA83470.1"/>
    <property type="molecule type" value="Genomic_DNA"/>
</dbReference>
<dbReference type="EMBL" id="AE001363">
    <property type="protein sequence ID" value="AAD18307.1"/>
    <property type="molecule type" value="Genomic_DNA"/>
</dbReference>
<dbReference type="EMBL" id="AE002161">
    <property type="protein sequence ID" value="AAF38432.1"/>
    <property type="molecule type" value="Genomic_DNA"/>
</dbReference>
<dbReference type="EMBL" id="BA000008">
    <property type="protein sequence ID" value="BAA98364.1"/>
    <property type="molecule type" value="Genomic_DNA"/>
</dbReference>
<dbReference type="EMBL" id="AE009440">
    <property type="protein sequence ID" value="AAP98088.1"/>
    <property type="molecule type" value="Genomic_DNA"/>
</dbReference>
<dbReference type="EMBL" id="X80061">
    <property type="protein sequence ID" value="CAA56368.1"/>
    <property type="molecule type" value="Genomic_DNA"/>
</dbReference>
<dbReference type="EMBL" id="AF111204">
    <property type="protein sequence ID" value="AAD20340.1"/>
    <property type="molecule type" value="Genomic_DNA"/>
</dbReference>
<dbReference type="PIR" id="B86510">
    <property type="entry name" value="B86510"/>
</dbReference>
<dbReference type="PIR" id="E81557">
    <property type="entry name" value="E81557"/>
</dbReference>
<dbReference type="PIR" id="S70546">
    <property type="entry name" value="S70546"/>
</dbReference>
<dbReference type="RefSeq" id="NP_224362.1">
    <property type="nucleotide sequence ID" value="NC_000922.1"/>
</dbReference>
<dbReference type="RefSeq" id="WP_010882804.1">
    <property type="nucleotide sequence ID" value="NZ_LN847257.1"/>
</dbReference>
<dbReference type="RefSeq" id="WP_010892118.1">
    <property type="nucleotide sequence ID" value="NZ_LN846995.1"/>
</dbReference>
<dbReference type="SMR" id="Q46222"/>
<dbReference type="STRING" id="406984.CPK_ORF00670"/>
<dbReference type="CAZy" id="GT30">
    <property type="family name" value="Glycosyltransferase Family 30"/>
</dbReference>
<dbReference type="GeneID" id="45050199"/>
<dbReference type="KEGG" id="cpa:CP_0617"/>
<dbReference type="KEGG" id="cpj:gseA"/>
<dbReference type="KEGG" id="cpn:CPn_0154"/>
<dbReference type="KEGG" id="cpt:CpB0155"/>
<dbReference type="PATRIC" id="fig|115713.3.peg.176"/>
<dbReference type="eggNOG" id="COG1519">
    <property type="taxonomic scope" value="Bacteria"/>
</dbReference>
<dbReference type="HOGENOM" id="CLU_036146_2_0_0"/>
<dbReference type="OrthoDB" id="9789797at2"/>
<dbReference type="BioCyc" id="MetaCyc:MONOMER-15504"/>
<dbReference type="BRENDA" id="2.4.99.12">
    <property type="organism ID" value="1311"/>
</dbReference>
<dbReference type="BRENDA" id="2.4.99.13">
    <property type="organism ID" value="1311"/>
</dbReference>
<dbReference type="BRENDA" id="2.4.99.14">
    <property type="organism ID" value="1311"/>
</dbReference>
<dbReference type="UniPathway" id="UPA00958"/>
<dbReference type="Proteomes" id="UP000000583">
    <property type="component" value="Chromosome"/>
</dbReference>
<dbReference type="Proteomes" id="UP000000801">
    <property type="component" value="Chromosome"/>
</dbReference>
<dbReference type="GO" id="GO:0005886">
    <property type="term" value="C:plasma membrane"/>
    <property type="evidence" value="ECO:0007669"/>
    <property type="project" value="UniProtKB-SubCell"/>
</dbReference>
<dbReference type="GO" id="GO:0043842">
    <property type="term" value="F:Kdo transferase activity"/>
    <property type="evidence" value="ECO:0007669"/>
    <property type="project" value="UniProtKB-EC"/>
</dbReference>
<dbReference type="GO" id="GO:0009245">
    <property type="term" value="P:lipid A biosynthetic process"/>
    <property type="evidence" value="ECO:0007669"/>
    <property type="project" value="TreeGrafter"/>
</dbReference>
<dbReference type="GO" id="GO:0009244">
    <property type="term" value="P:lipopolysaccharide core region biosynthetic process"/>
    <property type="evidence" value="ECO:0007669"/>
    <property type="project" value="UniProtKB-UniPathway"/>
</dbReference>
<dbReference type="Gene3D" id="3.40.50.11720">
    <property type="entry name" value="3-Deoxy-D-manno-octulosonic-acid transferase, N-terminal domain"/>
    <property type="match status" value="1"/>
</dbReference>
<dbReference type="Gene3D" id="3.40.50.2000">
    <property type="entry name" value="Glycogen Phosphorylase B"/>
    <property type="match status" value="1"/>
</dbReference>
<dbReference type="InterPro" id="IPR007507">
    <property type="entry name" value="Glycos_transf_N"/>
</dbReference>
<dbReference type="InterPro" id="IPR038107">
    <property type="entry name" value="Glycos_transf_N_sf"/>
</dbReference>
<dbReference type="InterPro" id="IPR039901">
    <property type="entry name" value="Kdotransferase"/>
</dbReference>
<dbReference type="NCBIfam" id="NF004389">
    <property type="entry name" value="PRK05749.1-5"/>
    <property type="match status" value="1"/>
</dbReference>
<dbReference type="PANTHER" id="PTHR42755:SF1">
    <property type="entry name" value="3-DEOXY-D-MANNO-OCTULOSONIC ACID TRANSFERASE, MITOCHONDRIAL-RELATED"/>
    <property type="match status" value="1"/>
</dbReference>
<dbReference type="PANTHER" id="PTHR42755">
    <property type="entry name" value="3-DEOXY-MANNO-OCTULOSONATE CYTIDYLYLTRANSFERASE"/>
    <property type="match status" value="1"/>
</dbReference>
<dbReference type="Pfam" id="PF04413">
    <property type="entry name" value="Glycos_transf_N"/>
    <property type="match status" value="1"/>
</dbReference>
<dbReference type="SUPFAM" id="SSF53756">
    <property type="entry name" value="UDP-Glycosyltransferase/glycogen phosphorylase"/>
    <property type="match status" value="1"/>
</dbReference>
<reference key="1">
    <citation type="journal article" date="1995" name="Mol. Microbiol.">
        <title>Molecular cloning, sequence analysis, and functional characterization of the lipopolysaccharide biosynthetic gene kdtA encoding 3-deoxy-alpha-D-manno-octulosonic acid transferase of Chlamydia pneumoniae strain TW-183.</title>
        <authorList>
            <person name="Loebau S."/>
            <person name="Mamat U."/>
            <person name="Brabetz W."/>
            <person name="Brade H."/>
        </authorList>
    </citation>
    <scope>NUCLEOTIDE SEQUENCE [GENOMIC DNA]</scope>
    <scope>FUNCTION</scope>
    <scope>CATALYTIC ACTIVITY</scope>
    <scope>TRIFUNCTIONALITY</scope>
    <source>
        <strain>TW-183</strain>
    </source>
</reference>
<reference key="2">
    <citation type="journal article" date="1999" name="Nat. Genet.">
        <title>Comparative genomes of Chlamydia pneumoniae and C. trachomatis.</title>
        <authorList>
            <person name="Kalman S."/>
            <person name="Mitchell W.P."/>
            <person name="Marathe R."/>
            <person name="Lammel C.J."/>
            <person name="Fan J."/>
            <person name="Hyman R.W."/>
            <person name="Olinger L."/>
            <person name="Grimwood J."/>
            <person name="Davis R.W."/>
            <person name="Stephens R.S."/>
        </authorList>
    </citation>
    <scope>NUCLEOTIDE SEQUENCE [LARGE SCALE GENOMIC DNA]</scope>
    <source>
        <strain>CWL029</strain>
    </source>
</reference>
<reference key="3">
    <citation type="journal article" date="2000" name="Nucleic Acids Res.">
        <title>Genome sequences of Chlamydia trachomatis MoPn and Chlamydia pneumoniae AR39.</title>
        <authorList>
            <person name="Read T.D."/>
            <person name="Brunham R.C."/>
            <person name="Shen C."/>
            <person name="Gill S.R."/>
            <person name="Heidelberg J.F."/>
            <person name="White O."/>
            <person name="Hickey E.K."/>
            <person name="Peterson J.D."/>
            <person name="Utterback T.R."/>
            <person name="Berry K.J."/>
            <person name="Bass S."/>
            <person name="Linher K.D."/>
            <person name="Weidman J.F."/>
            <person name="Khouri H.M."/>
            <person name="Craven B."/>
            <person name="Bowman C."/>
            <person name="Dodson R.J."/>
            <person name="Gwinn M.L."/>
            <person name="Nelson W.C."/>
            <person name="DeBoy R.T."/>
            <person name="Kolonay J.F."/>
            <person name="McClarty G."/>
            <person name="Salzberg S.L."/>
            <person name="Eisen J.A."/>
            <person name="Fraser C.M."/>
        </authorList>
    </citation>
    <scope>NUCLEOTIDE SEQUENCE [LARGE SCALE GENOMIC DNA]</scope>
    <source>
        <strain>AR39</strain>
    </source>
</reference>
<reference key="4">
    <citation type="journal article" date="2000" name="Nucleic Acids Res.">
        <title>Comparison of whole genome sequences of Chlamydia pneumoniae J138 from Japan and CWL029 from USA.</title>
        <authorList>
            <person name="Shirai M."/>
            <person name="Hirakawa H."/>
            <person name="Kimoto M."/>
            <person name="Tabuchi M."/>
            <person name="Kishi F."/>
            <person name="Ouchi K."/>
            <person name="Shiba T."/>
            <person name="Ishii K."/>
            <person name="Hattori M."/>
            <person name="Kuhara S."/>
            <person name="Nakazawa T."/>
        </authorList>
    </citation>
    <scope>NUCLEOTIDE SEQUENCE [LARGE SCALE GENOMIC DNA]</scope>
    <source>
        <strain>J138</strain>
    </source>
</reference>
<reference key="5">
    <citation type="submission" date="2002-05" db="EMBL/GenBank/DDBJ databases">
        <title>The genome sequence of Chlamydia pneumoniae TW183 and comparison with other Chlamydia strains based on whole genome sequence analysis.</title>
        <authorList>
            <person name="Geng M.M."/>
            <person name="Schuhmacher A."/>
            <person name="Muehldorfer I."/>
            <person name="Bensch K.W."/>
            <person name="Schaefer K.P."/>
            <person name="Schneider S."/>
            <person name="Pohl T."/>
            <person name="Essig A."/>
            <person name="Marre R."/>
            <person name="Melchers K."/>
        </authorList>
    </citation>
    <scope>NUCLEOTIDE SEQUENCE [LARGE SCALE GENOMIC DNA]</scope>
    <source>
        <strain>TW-183</strain>
    </source>
</reference>
<reference key="6">
    <citation type="journal article" date="1997" name="Res. Microbiol.">
        <title>Lipopolysaccharide biosynthesis genes in koala type I Chlamydia: cloning and characterization.</title>
        <authorList>
            <person name="Girjes A."/>
            <person name="Carrick F.N."/>
            <person name="Lavin M.F."/>
        </authorList>
    </citation>
    <scope>NUCLEOTIDE SEQUENCE [GENOMIC DNA]</scope>
    <source>
        <strain>Koala type I</strain>
    </source>
</reference>
<reference key="7">
    <citation type="submission" date="1998-12" db="EMBL/GenBank/DDBJ databases">
        <title>PCR amplification and sequencing of the partial coding region of the Kdo transferase of Chlamydia.</title>
        <authorList>
            <person name="Kaltenboeck B."/>
            <person name="Gao D."/>
        </authorList>
    </citation>
    <scope>NUCLEOTIDE SEQUENCE [GENOMIC DNA] OF 70-329</scope>
    <source>
        <strain>AR3883</strain>
    </source>
</reference>
<reference key="8">
    <citation type="journal article" date="2000" name="Eur. J. Biochem.">
        <title>Comparative analyses of secondary gene products of 3-deoxy-D-manno-oct-2-ulosonic acid transferases from Chlamydiaceae in Escherichia coli K-12.</title>
        <authorList>
            <person name="Brabetz W."/>
            <person name="Lindner B."/>
            <person name="Brade H."/>
        </authorList>
    </citation>
    <scope>FUNCTION</scope>
    <scope>CATALYTIC ACTIVITY</scope>
    <scope>TRIFUNCTIONALITY</scope>
    <source>
        <strain>TW-183</strain>
    </source>
</reference>
<accession>Q46222</accession>
<accession>Q46224</accession>
<accession>Q9JS00</accession>
<accession>Q9S6B4</accession>
<feature type="chain" id="PRO_0000080283" description="3-deoxy-D-manno-octulosonic acid transferase">
    <location>
        <begin position="1"/>
        <end position="437"/>
    </location>
</feature>
<feature type="transmembrane region" description="Helical; Signal-anchor" evidence="2">
    <location>
        <begin position="16"/>
        <end position="36"/>
    </location>
</feature>
<feature type="active site" description="Proton acceptor" evidence="1">
    <location>
        <position position="70"/>
    </location>
</feature>
<feature type="binding site" evidence="1">
    <location>
        <begin position="279"/>
        <end position="280"/>
    </location>
    <ligand>
        <name>CMP</name>
        <dbReference type="ChEBI" id="CHEBI:60377"/>
    </ligand>
</feature>
<feature type="binding site" evidence="1">
    <location>
        <begin position="319"/>
        <end position="321"/>
    </location>
    <ligand>
        <name>CMP</name>
        <dbReference type="ChEBI" id="CHEBI:60377"/>
    </ligand>
</feature>
<feature type="binding site" evidence="1">
    <location>
        <begin position="346"/>
        <end position="349"/>
    </location>
    <ligand>
        <name>CMP</name>
        <dbReference type="ChEBI" id="CHEBI:60377"/>
    </ligand>
</feature>
<feature type="site" description="Transition state stabilizer" evidence="1">
    <location>
        <position position="141"/>
    </location>
</feature>
<feature type="site" description="Transition state stabilizer" evidence="1">
    <location>
        <position position="219"/>
    </location>
</feature>
<feature type="sequence variant" description="In strain: Koala type I.">
    <original>V</original>
    <variation>I</variation>
    <location>
        <position position="6"/>
    </location>
</feature>
<feature type="sequence variant" description="In strain: Koala type I.">
    <original>N</original>
    <variation>T</variation>
    <location>
        <position position="183"/>
    </location>
</feature>
<feature type="sequence variant" description="In strain: Koala type I.">
    <original>R</original>
    <variation>P</variation>
    <location>
        <position position="201"/>
    </location>
</feature>
<feature type="sequence variant" description="In strain: Koala type I.">
    <original>T</original>
    <variation>A</variation>
    <location>
        <position position="234"/>
    </location>
</feature>
<feature type="sequence variant" description="In strain: Koala type I.">
    <original>I</original>
    <variation>V</variation>
    <location>
        <position position="249"/>
    </location>
</feature>
<feature type="sequence variant" description="In strain: Koala type I.">
    <original>VP</original>
    <variation>TS</variation>
    <location>
        <begin position="311"/>
        <end position="312"/>
    </location>
</feature>
<feature type="sequence variant" description="In strain: Koala type I.">
    <original>EL</original>
    <variation>DV</variation>
    <location>
        <begin position="368"/>
        <end position="369"/>
    </location>
</feature>
<feature type="sequence variant" description="In strain: Koala type I.">
    <original>V</original>
    <variation>M</variation>
    <location>
        <position position="401"/>
    </location>
</feature>
<feature type="sequence variant" description="In strain: Koala type I.">
    <original>V</original>
    <variation>L</variation>
    <location>
        <position position="413"/>
    </location>
</feature>
<feature type="sequence conflict" description="In Ref. 3 and 4." evidence="5" ref="3 4">
    <original>V</original>
    <variation>A</variation>
    <location>
        <position position="137"/>
    </location>
</feature>
<feature type="sequence conflict" description="In Ref. 6; CAA56368." evidence="5" ref="6">
    <original>RIGATTLVING</original>
    <variation>TYRCNYSRHQW</variation>
    <location>
        <begin position="154"/>
        <end position="164"/>
    </location>
</feature>
<feature type="sequence conflict" description="In Ref. 6." evidence="5" ref="6">
    <original>LHIPYGLWSRGAN</original>
    <variation>CTFLMGCGAVVHQ</variation>
    <location>
        <begin position="295"/>
        <end position="307"/>
    </location>
</feature>
<feature type="sequence conflict" description="In Ref. 6; CAA56368." evidence="5" ref="6">
    <original>IGL</original>
    <variation>NWLV</variation>
    <location>
        <begin position="319"/>
        <end position="321"/>
    </location>
</feature>
<proteinExistence type="evidence at protein level"/>
<keyword id="KW-0997">Cell inner membrane</keyword>
<keyword id="KW-1003">Cell membrane</keyword>
<keyword id="KW-0448">Lipopolysaccharide biosynthesis</keyword>
<keyword id="KW-0472">Membrane</keyword>
<keyword id="KW-0735">Signal-anchor</keyword>
<keyword id="KW-0808">Transferase</keyword>
<keyword id="KW-0812">Transmembrane</keyword>
<keyword id="KW-1133">Transmembrane helix</keyword>
<gene>
    <name type="primary">waaA</name>
    <name type="synonym">gseA</name>
    <name type="synonym">kdtA</name>
    <name type="ordered locus">CPn_0154</name>
    <name type="ordered locus">CP_0617</name>
    <name type="ordered locus">CpB0155</name>
</gene>
<name>KDTA_CHLPN</name>
<protein>
    <recommendedName>
        <fullName>3-deoxy-D-manno-octulosonic acid transferase</fullName>
        <shortName>Kdo transferase</shortName>
        <ecNumber evidence="3 4">2.4.99.12</ecNumber>
        <ecNumber evidence="3 4">2.4.99.13</ecNumber>
        <ecNumber evidence="3 4">2.4.99.14</ecNumber>
    </recommendedName>
    <alternativeName>
        <fullName>Kdo(2)-lipid IV(A) 3-deoxy-D-manno-octulosonic acid transferase</fullName>
    </alternativeName>
    <alternativeName>
        <fullName>Kdo-lipid IV(A) 3-deoxy-D-manno-octulosonic acid transferase</fullName>
    </alternativeName>
    <alternativeName>
        <fullName>Lipid IV(A) 3-deoxy-D-manno-octulosonic acid transferase</fullName>
    </alternativeName>
    <alternativeName>
        <fullName>Trifunctional Kdo transferase</fullName>
    </alternativeName>
</protein>
<sequence length="437" mass="49187">MMLRGVHRIFKCFYDVVLVCAFVIALPKLLYKMLVYGKYKKSLAVRFGLKKPHVPGEGPLVWFHGASVGEVRLLLPVLEKFCEEFPGWRCLVTSCTELGVQVASQVFIPMGATVSILPLDFSIIIKSVVAKLRPSLVVFSEGDCWLNFIEEAKRIGATTLVINGRISIDSSKRFKFLKRLGKNYFSPVDGFLLQDEVQKQRFLSLGIPEHKLQVTGNIKTYVAAQTALHLERETWRDRLRLPTDSKLVILGSMHRSDAGKWLPVVQKLIKEGVSVLWVPRHVEKTKDVEESLHRLHIPYGLWSRGANFSYVPVVVVDEIGLLKQLYVAGDLAFVGGTFDPKIGGHNLLEPLQCEVPLIFGPHITSQSELAQRLLLSGAGLCLDEIEPIIDTVSFLLNNQEVREAYVQKGKVFVKAETASFDRTWRALKSYIPLYKNS</sequence>